<comment type="function">
    <text evidence="1 7">Mevalonate kinase; part of the second module of ergosterol biosynthesis pathway that includes the middle steps of the pathway (By similarity). ERG12 converts mevalonate into 5-phosphomevalonate (By similarity). The second module is carried out in the vacuole and involves the formation of farnesyl diphosphate, which is also an important intermediate in the biosynthesis of ubiquinone, dolichol, heme and prenylated proteins. Activity by the mevalonate kinase ERG12 first converts mevalonate into 5-phosphomevalonate. 5-phosphomevalonate is then further converted to 5-diphosphomevalonate by the phosphomevalonate kinase ERG8. The diphosphomevalonate decarboxylase MVD then produces isopentenyl diphosphate. The isopentenyl-diphosphate delta-isomerase IDI1 then catalyzes the 1,3-allylic rearrangement of the homoallylic substrate isopentenyl (IPP) to its highly electrophilic allylic isomer, dimethylallyl diphosphate (DMAPP). Finally the farnesyl diphosphate synthase ERG20 catalyzes the sequential condensation of isopentenyl pyrophosphate with dimethylallyl pyrophosphate, and then with the resultant geranylpyrophosphate to the ultimate product farnesyl pyrophosphate (Probable).</text>
</comment>
<comment type="catalytic activity">
    <reaction evidence="1">
        <text>(R)-mevalonate + ATP = (R)-5-phosphomevalonate + ADP + H(+)</text>
        <dbReference type="Rhea" id="RHEA:17065"/>
        <dbReference type="ChEBI" id="CHEBI:15378"/>
        <dbReference type="ChEBI" id="CHEBI:30616"/>
        <dbReference type="ChEBI" id="CHEBI:36464"/>
        <dbReference type="ChEBI" id="CHEBI:58146"/>
        <dbReference type="ChEBI" id="CHEBI:456216"/>
        <dbReference type="EC" id="2.7.1.36"/>
    </reaction>
    <physiologicalReaction direction="left-to-right" evidence="1">
        <dbReference type="Rhea" id="RHEA:17066"/>
    </physiologicalReaction>
</comment>
<comment type="pathway">
    <text evidence="7">Isoprenoid biosynthesis; isopentenyl diphosphate biosynthesis via mevalonate pathway; isopentenyl diphosphate from (R)-mevalonate: step 1/3.</text>
</comment>
<comment type="subunit">
    <text evidence="2">Homodimer.</text>
</comment>
<comment type="subcellular location">
    <subcellularLocation>
        <location evidence="6">Cytoplasm</location>
        <location evidence="6">Cytosol</location>
    </subcellularLocation>
</comment>
<comment type="induction">
    <text evidence="4">Expression is up-regulated in response to terbinafine.</text>
</comment>
<comment type="similarity">
    <text evidence="6">Belongs to the GHMP kinase family. Mevalonate kinase subfamily.</text>
</comment>
<name>ERG12_CANAL</name>
<evidence type="ECO:0000250" key="1">
    <source>
        <dbReference type="UniProtKB" id="P07277"/>
    </source>
</evidence>
<evidence type="ECO:0000250" key="2">
    <source>
        <dbReference type="UniProtKB" id="P17256"/>
    </source>
</evidence>
<evidence type="ECO:0000250" key="3">
    <source>
        <dbReference type="UniProtKB" id="Q03426"/>
    </source>
</evidence>
<evidence type="ECO:0000269" key="4">
    <source>
    </source>
</evidence>
<evidence type="ECO:0000303" key="5">
    <source>
    </source>
</evidence>
<evidence type="ECO:0000305" key="6"/>
<evidence type="ECO:0000305" key="7">
    <source>
    </source>
</evidence>
<gene>
    <name evidence="5" type="primary">ERG12</name>
    <name type="ordered locus">orf19.4809</name>
    <name type="ORF">CAALFM_C109460WA</name>
</gene>
<sequence>MSQLPFIVGAPGKVIIFGEHAAVYGKPAIAAALSLRCYLLVSPSSDSNTIRLQFPDIKLDHSWNIKDLPWEEIKPYLTYDSANKPQIPSELVPEIVDKLSSFLNGFDNKMHYYACFCFLYLLMNLCDSKVSGMNFIVRSTLPIGAGLGSSASTSVCLSSALALMGGWINKPSLHENDKLDTADIPDLEFIDKWSLIGEKCFHGNPSGIDNAVATFGGAVMFQRTSTPEQPSIRTNMRNFPAIKLLLTNTKVPKSTADLVAGVGRLNAEFNSISTSILTAIEHLSQEAYKVMMNPMFGREETNVLRKLVNINHGLLVALGVSHPALETVKIIGDKHRIGATKLTGAGGGGCAITLVNDDVEESVIHNAIKEFEDSGYESFETSLGGKGVGILFHEDLDDATKFSESQFCNYVDRAAIEDSLGMANVKEWKFW</sequence>
<keyword id="KW-0067">ATP-binding</keyword>
<keyword id="KW-0963">Cytoplasm</keyword>
<keyword id="KW-0418">Kinase</keyword>
<keyword id="KW-0444">Lipid biosynthesis</keyword>
<keyword id="KW-0443">Lipid metabolism</keyword>
<keyword id="KW-0460">Magnesium</keyword>
<keyword id="KW-0479">Metal-binding</keyword>
<keyword id="KW-0547">Nucleotide-binding</keyword>
<keyword id="KW-1185">Reference proteome</keyword>
<keyword id="KW-0752">Steroid biosynthesis</keyword>
<keyword id="KW-0753">Steroid metabolism</keyword>
<keyword id="KW-0756">Sterol biosynthesis</keyword>
<keyword id="KW-1207">Sterol metabolism</keyword>
<keyword id="KW-0808">Transferase</keyword>
<accession>A0A1D8PEL1</accession>
<organism>
    <name type="scientific">Candida albicans (strain SC5314 / ATCC MYA-2876)</name>
    <name type="common">Yeast</name>
    <dbReference type="NCBI Taxonomy" id="237561"/>
    <lineage>
        <taxon>Eukaryota</taxon>
        <taxon>Fungi</taxon>
        <taxon>Dikarya</taxon>
        <taxon>Ascomycota</taxon>
        <taxon>Saccharomycotina</taxon>
        <taxon>Pichiomycetes</taxon>
        <taxon>Debaryomycetaceae</taxon>
        <taxon>Candida/Lodderomyces clade</taxon>
        <taxon>Candida</taxon>
    </lineage>
</organism>
<feature type="chain" id="PRO_0000454167" description="Mevalonate kinase">
    <location>
        <begin position="1"/>
        <end position="431"/>
    </location>
</feature>
<feature type="active site" description="Proton acceptor" evidence="3">
    <location>
        <position position="209"/>
    </location>
</feature>
<feature type="binding site" evidence="2">
    <location>
        <position position="13"/>
    </location>
    <ligand>
        <name>ATP</name>
        <dbReference type="ChEBI" id="CHEBI:30616"/>
    </ligand>
</feature>
<feature type="binding site" evidence="2">
    <location>
        <position position="139"/>
    </location>
    <ligand>
        <name>ATP</name>
        <dbReference type="ChEBI" id="CHEBI:30616"/>
    </ligand>
</feature>
<feature type="binding site" evidence="2">
    <location>
        <begin position="144"/>
        <end position="150"/>
    </location>
    <ligand>
        <name>ATP</name>
        <dbReference type="ChEBI" id="CHEBI:30616"/>
    </ligand>
</feature>
<feature type="binding site" evidence="2">
    <location>
        <position position="150"/>
    </location>
    <ligand>
        <name>Mg(2+)</name>
        <dbReference type="ChEBI" id="CHEBI:18420"/>
    </ligand>
</feature>
<feature type="binding site" evidence="2">
    <location>
        <position position="198"/>
    </location>
    <ligand>
        <name>Mg(2+)</name>
        <dbReference type="ChEBI" id="CHEBI:18420"/>
    </ligand>
</feature>
<reference key="1">
    <citation type="journal article" date="2004" name="Proc. Natl. Acad. Sci. U.S.A.">
        <title>The diploid genome sequence of Candida albicans.</title>
        <authorList>
            <person name="Jones T."/>
            <person name="Federspiel N.A."/>
            <person name="Chibana H."/>
            <person name="Dungan J."/>
            <person name="Kalman S."/>
            <person name="Magee B.B."/>
            <person name="Newport G."/>
            <person name="Thorstenson Y.R."/>
            <person name="Agabian N."/>
            <person name="Magee P.T."/>
            <person name="Davis R.W."/>
            <person name="Scherer S."/>
        </authorList>
    </citation>
    <scope>NUCLEOTIDE SEQUENCE [LARGE SCALE GENOMIC DNA]</scope>
    <source>
        <strain>SC5314 / ATCC MYA-2876</strain>
    </source>
</reference>
<reference key="2">
    <citation type="journal article" date="2007" name="Genome Biol.">
        <title>Assembly of the Candida albicans genome into sixteen supercontigs aligned on the eight chromosomes.</title>
        <authorList>
            <person name="van het Hoog M."/>
            <person name="Rast T.J."/>
            <person name="Martchenko M."/>
            <person name="Grindle S."/>
            <person name="Dignard D."/>
            <person name="Hogues H."/>
            <person name="Cuomo C."/>
            <person name="Berriman M."/>
            <person name="Scherer S."/>
            <person name="Magee B.B."/>
            <person name="Whiteway M."/>
            <person name="Chibana H."/>
            <person name="Nantel A."/>
            <person name="Magee P.T."/>
        </authorList>
    </citation>
    <scope>GENOME REANNOTATION</scope>
    <source>
        <strain>SC5314 / ATCC MYA-2876</strain>
    </source>
</reference>
<reference key="3">
    <citation type="journal article" date="2013" name="Genome Biol.">
        <title>Assembly of a phased diploid Candida albicans genome facilitates allele-specific measurements and provides a simple model for repeat and indel structure.</title>
        <authorList>
            <person name="Muzzey D."/>
            <person name="Schwartz K."/>
            <person name="Weissman J.S."/>
            <person name="Sherlock G."/>
        </authorList>
    </citation>
    <scope>NUCLEOTIDE SEQUENCE [LARGE SCALE GENOMIC DNA]</scope>
    <scope>GENOME REANNOTATION</scope>
    <source>
        <strain>SC5314 / ATCC MYA-2876</strain>
    </source>
</reference>
<reference key="4">
    <citation type="journal article" date="2003" name="Med. Mycol.">
        <title>Antifungal activity of fluconazole in combination with lovastatin and their effects on gene expression in the ergosterol and prenylation pathways in Candida albicans.</title>
        <authorList>
            <person name="Song J.L."/>
            <person name="Lyons C.N."/>
            <person name="Holleman S."/>
            <person name="Oliver B.G."/>
            <person name="White T.C."/>
        </authorList>
    </citation>
    <scope>FUNCTION</scope>
</reference>
<reference key="5">
    <citation type="journal article" date="2007" name="Chin. Med. J.">
        <title>Genome-wide expression profiling of the response to terbinafine in Candida albicans using a cDNA microarray analysis.</title>
        <authorList>
            <person name="Zeng Y.B."/>
            <person name="Qian Y.S."/>
            <person name="Ma L."/>
            <person name="Gu H.N."/>
        </authorList>
    </citation>
    <scope>INDUCTION</scope>
</reference>
<dbReference type="EC" id="2.7.1.36" evidence="1"/>
<dbReference type="EMBL" id="CP017623">
    <property type="protein sequence ID" value="AOW26579.1"/>
    <property type="molecule type" value="Genomic_DNA"/>
</dbReference>
<dbReference type="RefSeq" id="XP_723495.2">
    <property type="nucleotide sequence ID" value="XM_718402.2"/>
</dbReference>
<dbReference type="SMR" id="A0A1D8PEL1"/>
<dbReference type="FunCoup" id="A0A1D8PEL1">
    <property type="interactions" value="454"/>
</dbReference>
<dbReference type="STRING" id="237561.A0A1D8PEL1"/>
<dbReference type="EnsemblFungi" id="C1_09460W_A-T">
    <property type="protein sequence ID" value="C1_09460W_A-T-p1"/>
    <property type="gene ID" value="C1_09460W_A"/>
</dbReference>
<dbReference type="GeneID" id="3634859"/>
<dbReference type="KEGG" id="cal:CAALFM_C109460WA"/>
<dbReference type="CGD" id="CAL0000186221">
    <property type="gene designation" value="ERG12"/>
</dbReference>
<dbReference type="VEuPathDB" id="FungiDB:C1_09460W_A"/>
<dbReference type="eggNOG" id="KOG1511">
    <property type="taxonomic scope" value="Eukaryota"/>
</dbReference>
<dbReference type="InParanoid" id="A0A1D8PEL1"/>
<dbReference type="OrthoDB" id="1652964at2759"/>
<dbReference type="UniPathway" id="UPA00057">
    <property type="reaction ID" value="UER00098"/>
</dbReference>
<dbReference type="Proteomes" id="UP000000559">
    <property type="component" value="Chromosome 1"/>
</dbReference>
<dbReference type="GO" id="GO:0005829">
    <property type="term" value="C:cytosol"/>
    <property type="evidence" value="ECO:0000318"/>
    <property type="project" value="GO_Central"/>
</dbReference>
<dbReference type="GO" id="GO:0005524">
    <property type="term" value="F:ATP binding"/>
    <property type="evidence" value="ECO:0007669"/>
    <property type="project" value="UniProtKB-KW"/>
</dbReference>
<dbReference type="GO" id="GO:0046872">
    <property type="term" value="F:metal ion binding"/>
    <property type="evidence" value="ECO:0007669"/>
    <property type="project" value="UniProtKB-KW"/>
</dbReference>
<dbReference type="GO" id="GO:0004496">
    <property type="term" value="F:mevalonate kinase activity"/>
    <property type="evidence" value="ECO:0000318"/>
    <property type="project" value="GO_Central"/>
</dbReference>
<dbReference type="GO" id="GO:0006696">
    <property type="term" value="P:ergosterol biosynthetic process"/>
    <property type="evidence" value="ECO:0000318"/>
    <property type="project" value="GO_Central"/>
</dbReference>
<dbReference type="GO" id="GO:0010142">
    <property type="term" value="P:farnesyl diphosphate biosynthetic process, mevalonate pathway"/>
    <property type="evidence" value="ECO:0007669"/>
    <property type="project" value="EnsemblFungi"/>
</dbReference>
<dbReference type="GO" id="GO:0019287">
    <property type="term" value="P:isopentenyl diphosphate biosynthetic process, mevalonate pathway"/>
    <property type="evidence" value="ECO:0000318"/>
    <property type="project" value="GO_Central"/>
</dbReference>
<dbReference type="FunFam" id="3.30.230.10:FF:000027">
    <property type="entry name" value="Mevalonate kinase"/>
    <property type="match status" value="1"/>
</dbReference>
<dbReference type="FunFam" id="3.30.70.890:FF:000003">
    <property type="entry name" value="Mevalonate kinase"/>
    <property type="match status" value="1"/>
</dbReference>
<dbReference type="Gene3D" id="3.30.230.10">
    <property type="match status" value="1"/>
</dbReference>
<dbReference type="Gene3D" id="3.30.70.890">
    <property type="entry name" value="GHMP kinase, C-terminal domain"/>
    <property type="match status" value="1"/>
</dbReference>
<dbReference type="InterPro" id="IPR013750">
    <property type="entry name" value="GHMP_kinase_C_dom"/>
</dbReference>
<dbReference type="InterPro" id="IPR036554">
    <property type="entry name" value="GHMP_kinase_C_sf"/>
</dbReference>
<dbReference type="InterPro" id="IPR006204">
    <property type="entry name" value="GHMP_kinase_N_dom"/>
</dbReference>
<dbReference type="InterPro" id="IPR006203">
    <property type="entry name" value="GHMP_knse_ATP-bd_CS"/>
</dbReference>
<dbReference type="InterPro" id="IPR006205">
    <property type="entry name" value="Mev_gal_kin"/>
</dbReference>
<dbReference type="InterPro" id="IPR020568">
    <property type="entry name" value="Ribosomal_Su5_D2-typ_SF"/>
</dbReference>
<dbReference type="InterPro" id="IPR014721">
    <property type="entry name" value="Ribsml_uS5_D2-typ_fold_subgr"/>
</dbReference>
<dbReference type="NCBIfam" id="TIGR00549">
    <property type="entry name" value="mevalon_kin"/>
    <property type="match status" value="1"/>
</dbReference>
<dbReference type="PANTHER" id="PTHR43290">
    <property type="entry name" value="MEVALONATE KINASE"/>
    <property type="match status" value="1"/>
</dbReference>
<dbReference type="PANTHER" id="PTHR43290:SF2">
    <property type="entry name" value="MEVALONATE KINASE"/>
    <property type="match status" value="1"/>
</dbReference>
<dbReference type="Pfam" id="PF08544">
    <property type="entry name" value="GHMP_kinases_C"/>
    <property type="match status" value="1"/>
</dbReference>
<dbReference type="Pfam" id="PF00288">
    <property type="entry name" value="GHMP_kinases_N"/>
    <property type="match status" value="1"/>
</dbReference>
<dbReference type="PRINTS" id="PR00959">
    <property type="entry name" value="MEVGALKINASE"/>
</dbReference>
<dbReference type="SUPFAM" id="SSF55060">
    <property type="entry name" value="GHMP Kinase, C-terminal domain"/>
    <property type="match status" value="1"/>
</dbReference>
<dbReference type="SUPFAM" id="SSF54211">
    <property type="entry name" value="Ribosomal protein S5 domain 2-like"/>
    <property type="match status" value="1"/>
</dbReference>
<dbReference type="PROSITE" id="PS00627">
    <property type="entry name" value="GHMP_KINASES_ATP"/>
    <property type="match status" value="1"/>
</dbReference>
<proteinExistence type="evidence at transcript level"/>
<protein>
    <recommendedName>
        <fullName evidence="1">Mevalonate kinase</fullName>
        <shortName evidence="1">MK</shortName>
        <shortName evidence="1">MvK</shortName>
        <ecNumber evidence="1">2.7.1.36</ecNumber>
    </recommendedName>
    <alternativeName>
        <fullName evidence="5">Ergosterol biosynthesis protein 12</fullName>
    </alternativeName>
    <alternativeName>
        <fullName evidence="1">Regulation of autonomous replication protein 1</fullName>
    </alternativeName>
</protein>